<sequence length="92" mass="10891">MAFVKRDNKNKKRFQQQNPLFKRKRFCRFTVAGVEQIDYKDLDTLKDFIGDNGKITPARLTGTKAHYQRQLDTAIKRARFLALMPYTDLHKN</sequence>
<name>RS18_CUPNH</name>
<accession>Q0K9E7</accession>
<reference key="1">
    <citation type="journal article" date="2006" name="Nat. Biotechnol.">
        <title>Genome sequence of the bioplastic-producing 'Knallgas' bacterium Ralstonia eutropha H16.</title>
        <authorList>
            <person name="Pohlmann A."/>
            <person name="Fricke W.F."/>
            <person name="Reinecke F."/>
            <person name="Kusian B."/>
            <person name="Liesegang H."/>
            <person name="Cramm R."/>
            <person name="Eitinger T."/>
            <person name="Ewering C."/>
            <person name="Poetter M."/>
            <person name="Schwartz E."/>
            <person name="Strittmatter A."/>
            <person name="Voss I."/>
            <person name="Gottschalk G."/>
            <person name="Steinbuechel A."/>
            <person name="Friedrich B."/>
            <person name="Bowien B."/>
        </authorList>
    </citation>
    <scope>NUCLEOTIDE SEQUENCE [LARGE SCALE GENOMIC DNA]</scope>
    <source>
        <strain>ATCC 17699 / DSM 428 / KCTC 22496 / NCIMB 10442 / H16 / Stanier 337</strain>
    </source>
</reference>
<comment type="function">
    <text evidence="1">Binds as a heterodimer with protein bS6 to the central domain of the 16S rRNA, where it helps stabilize the platform of the 30S subunit.</text>
</comment>
<comment type="subunit">
    <text evidence="1">Part of the 30S ribosomal subunit. Forms a tight heterodimer with protein bS6.</text>
</comment>
<comment type="similarity">
    <text evidence="1">Belongs to the bacterial ribosomal protein bS18 family.</text>
</comment>
<organism>
    <name type="scientific">Cupriavidus necator (strain ATCC 17699 / DSM 428 / KCTC 22496 / NCIMB 10442 / H16 / Stanier 337)</name>
    <name type="common">Ralstonia eutropha</name>
    <dbReference type="NCBI Taxonomy" id="381666"/>
    <lineage>
        <taxon>Bacteria</taxon>
        <taxon>Pseudomonadati</taxon>
        <taxon>Pseudomonadota</taxon>
        <taxon>Betaproteobacteria</taxon>
        <taxon>Burkholderiales</taxon>
        <taxon>Burkholderiaceae</taxon>
        <taxon>Cupriavidus</taxon>
    </lineage>
</organism>
<keyword id="KW-1185">Reference proteome</keyword>
<keyword id="KW-0687">Ribonucleoprotein</keyword>
<keyword id="KW-0689">Ribosomal protein</keyword>
<keyword id="KW-0694">RNA-binding</keyword>
<keyword id="KW-0699">rRNA-binding</keyword>
<evidence type="ECO:0000255" key="1">
    <source>
        <dbReference type="HAMAP-Rule" id="MF_00270"/>
    </source>
</evidence>
<evidence type="ECO:0000305" key="2"/>
<dbReference type="EMBL" id="AM260479">
    <property type="protein sequence ID" value="CAJ93374.1"/>
    <property type="molecule type" value="Genomic_DNA"/>
</dbReference>
<dbReference type="RefSeq" id="WP_006163606.1">
    <property type="nucleotide sequence ID" value="NZ_CP039287.1"/>
</dbReference>
<dbReference type="SMR" id="Q0K9E7"/>
<dbReference type="STRING" id="381666.H16_A2277"/>
<dbReference type="GeneID" id="98401469"/>
<dbReference type="KEGG" id="reh:H16_A2277"/>
<dbReference type="eggNOG" id="COG0238">
    <property type="taxonomic scope" value="Bacteria"/>
</dbReference>
<dbReference type="HOGENOM" id="CLU_148710_0_3_4"/>
<dbReference type="OrthoDB" id="9812008at2"/>
<dbReference type="Proteomes" id="UP000008210">
    <property type="component" value="Chromosome 1"/>
</dbReference>
<dbReference type="GO" id="GO:0022627">
    <property type="term" value="C:cytosolic small ribosomal subunit"/>
    <property type="evidence" value="ECO:0007669"/>
    <property type="project" value="TreeGrafter"/>
</dbReference>
<dbReference type="GO" id="GO:0070181">
    <property type="term" value="F:small ribosomal subunit rRNA binding"/>
    <property type="evidence" value="ECO:0007669"/>
    <property type="project" value="TreeGrafter"/>
</dbReference>
<dbReference type="GO" id="GO:0003735">
    <property type="term" value="F:structural constituent of ribosome"/>
    <property type="evidence" value="ECO:0007669"/>
    <property type="project" value="InterPro"/>
</dbReference>
<dbReference type="GO" id="GO:0006412">
    <property type="term" value="P:translation"/>
    <property type="evidence" value="ECO:0007669"/>
    <property type="project" value="UniProtKB-UniRule"/>
</dbReference>
<dbReference type="Gene3D" id="4.10.640.10">
    <property type="entry name" value="Ribosomal protein S18"/>
    <property type="match status" value="1"/>
</dbReference>
<dbReference type="HAMAP" id="MF_00270">
    <property type="entry name" value="Ribosomal_bS18"/>
    <property type="match status" value="1"/>
</dbReference>
<dbReference type="InterPro" id="IPR001648">
    <property type="entry name" value="Ribosomal_bS18"/>
</dbReference>
<dbReference type="InterPro" id="IPR018275">
    <property type="entry name" value="Ribosomal_bS18_CS"/>
</dbReference>
<dbReference type="InterPro" id="IPR036870">
    <property type="entry name" value="Ribosomal_bS18_sf"/>
</dbReference>
<dbReference type="NCBIfam" id="TIGR00165">
    <property type="entry name" value="S18"/>
    <property type="match status" value="1"/>
</dbReference>
<dbReference type="PANTHER" id="PTHR13479">
    <property type="entry name" value="30S RIBOSOMAL PROTEIN S18"/>
    <property type="match status" value="1"/>
</dbReference>
<dbReference type="PANTHER" id="PTHR13479:SF40">
    <property type="entry name" value="SMALL RIBOSOMAL SUBUNIT PROTEIN BS18M"/>
    <property type="match status" value="1"/>
</dbReference>
<dbReference type="Pfam" id="PF01084">
    <property type="entry name" value="Ribosomal_S18"/>
    <property type="match status" value="1"/>
</dbReference>
<dbReference type="PRINTS" id="PR00974">
    <property type="entry name" value="RIBOSOMALS18"/>
</dbReference>
<dbReference type="SUPFAM" id="SSF46911">
    <property type="entry name" value="Ribosomal protein S18"/>
    <property type="match status" value="1"/>
</dbReference>
<dbReference type="PROSITE" id="PS00057">
    <property type="entry name" value="RIBOSOMAL_S18"/>
    <property type="match status" value="1"/>
</dbReference>
<proteinExistence type="inferred from homology"/>
<gene>
    <name evidence="1" type="primary">rpsR</name>
    <name type="ordered locus">H16_A2277</name>
</gene>
<protein>
    <recommendedName>
        <fullName evidence="1">Small ribosomal subunit protein bS18</fullName>
    </recommendedName>
    <alternativeName>
        <fullName evidence="2">30S ribosomal protein S18</fullName>
    </alternativeName>
</protein>
<feature type="chain" id="PRO_1000003579" description="Small ribosomal subunit protein bS18">
    <location>
        <begin position="1"/>
        <end position="92"/>
    </location>
</feature>